<organism>
    <name type="scientific">Erwinia tasmaniensis (strain DSM 17950 / CFBP 7177 / CIP 109463 / NCPPB 4357 / Et1/99)</name>
    <dbReference type="NCBI Taxonomy" id="465817"/>
    <lineage>
        <taxon>Bacteria</taxon>
        <taxon>Pseudomonadati</taxon>
        <taxon>Pseudomonadota</taxon>
        <taxon>Gammaproteobacteria</taxon>
        <taxon>Enterobacterales</taxon>
        <taxon>Erwiniaceae</taxon>
        <taxon>Erwinia</taxon>
    </lineage>
</organism>
<accession>B2VD21</accession>
<comment type="function">
    <text evidence="1">Catalyzes the irreversible transfer of a propylamine group from the amino donor S-adenosylmethioninamine (decarboxy-AdoMet) to putrescine (1,4-diaminobutane) to yield spermidine.</text>
</comment>
<comment type="catalytic activity">
    <reaction evidence="1">
        <text>S-adenosyl 3-(methylsulfanyl)propylamine + putrescine = S-methyl-5'-thioadenosine + spermidine + H(+)</text>
        <dbReference type="Rhea" id="RHEA:12721"/>
        <dbReference type="ChEBI" id="CHEBI:15378"/>
        <dbReference type="ChEBI" id="CHEBI:17509"/>
        <dbReference type="ChEBI" id="CHEBI:57443"/>
        <dbReference type="ChEBI" id="CHEBI:57834"/>
        <dbReference type="ChEBI" id="CHEBI:326268"/>
        <dbReference type="EC" id="2.5.1.16"/>
    </reaction>
</comment>
<comment type="pathway">
    <text evidence="1">Amine and polyamine biosynthesis; spermidine biosynthesis; spermidine from putrescine: step 1/1.</text>
</comment>
<comment type="subunit">
    <text evidence="1">Homodimer or homotetramer.</text>
</comment>
<comment type="subcellular location">
    <subcellularLocation>
        <location evidence="1">Cytoplasm</location>
    </subcellularLocation>
</comment>
<comment type="similarity">
    <text evidence="1">Belongs to the spermidine/spermine synthase family.</text>
</comment>
<dbReference type="EC" id="2.5.1.16" evidence="1"/>
<dbReference type="EMBL" id="CU468135">
    <property type="protein sequence ID" value="CAO95877.1"/>
    <property type="molecule type" value="Genomic_DNA"/>
</dbReference>
<dbReference type="RefSeq" id="WP_012440579.1">
    <property type="nucleotide sequence ID" value="NC_010694.1"/>
</dbReference>
<dbReference type="SMR" id="B2VD21"/>
<dbReference type="STRING" id="465817.ETA_08310"/>
<dbReference type="KEGG" id="eta:ETA_08310"/>
<dbReference type="eggNOG" id="COG0421">
    <property type="taxonomic scope" value="Bacteria"/>
</dbReference>
<dbReference type="HOGENOM" id="CLU_048199_1_0_6"/>
<dbReference type="OrthoDB" id="9793120at2"/>
<dbReference type="UniPathway" id="UPA00248">
    <property type="reaction ID" value="UER00314"/>
</dbReference>
<dbReference type="Proteomes" id="UP000001726">
    <property type="component" value="Chromosome"/>
</dbReference>
<dbReference type="GO" id="GO:0005829">
    <property type="term" value="C:cytosol"/>
    <property type="evidence" value="ECO:0007669"/>
    <property type="project" value="TreeGrafter"/>
</dbReference>
<dbReference type="GO" id="GO:0004766">
    <property type="term" value="F:spermidine synthase activity"/>
    <property type="evidence" value="ECO:0007669"/>
    <property type="project" value="UniProtKB-UniRule"/>
</dbReference>
<dbReference type="GO" id="GO:0008295">
    <property type="term" value="P:spermidine biosynthetic process"/>
    <property type="evidence" value="ECO:0007669"/>
    <property type="project" value="UniProtKB-UniRule"/>
</dbReference>
<dbReference type="CDD" id="cd02440">
    <property type="entry name" value="AdoMet_MTases"/>
    <property type="match status" value="1"/>
</dbReference>
<dbReference type="FunFam" id="2.30.140.10:FF:000002">
    <property type="entry name" value="Polyamine aminopropyltransferase"/>
    <property type="match status" value="1"/>
</dbReference>
<dbReference type="FunFam" id="3.40.50.150:FF:000026">
    <property type="entry name" value="Polyamine aminopropyltransferase"/>
    <property type="match status" value="1"/>
</dbReference>
<dbReference type="Gene3D" id="2.30.140.10">
    <property type="entry name" value="Spermidine synthase, tetramerisation domain"/>
    <property type="match status" value="1"/>
</dbReference>
<dbReference type="Gene3D" id="3.40.50.150">
    <property type="entry name" value="Vaccinia Virus protein VP39"/>
    <property type="match status" value="1"/>
</dbReference>
<dbReference type="HAMAP" id="MF_00198">
    <property type="entry name" value="Spermidine_synth"/>
    <property type="match status" value="1"/>
</dbReference>
<dbReference type="InterPro" id="IPR030374">
    <property type="entry name" value="PABS"/>
</dbReference>
<dbReference type="InterPro" id="IPR030373">
    <property type="entry name" value="PABS_CS"/>
</dbReference>
<dbReference type="InterPro" id="IPR029063">
    <property type="entry name" value="SAM-dependent_MTases_sf"/>
</dbReference>
<dbReference type="InterPro" id="IPR001045">
    <property type="entry name" value="Spermi_synthase"/>
</dbReference>
<dbReference type="InterPro" id="IPR035246">
    <property type="entry name" value="Spermidine_synt_N"/>
</dbReference>
<dbReference type="InterPro" id="IPR037163">
    <property type="entry name" value="Spermidine_synt_N_sf"/>
</dbReference>
<dbReference type="NCBIfam" id="NF037959">
    <property type="entry name" value="MFS_SpdSyn"/>
    <property type="match status" value="1"/>
</dbReference>
<dbReference type="NCBIfam" id="NF002010">
    <property type="entry name" value="PRK00811.1"/>
    <property type="match status" value="1"/>
</dbReference>
<dbReference type="NCBIfam" id="TIGR00417">
    <property type="entry name" value="speE"/>
    <property type="match status" value="1"/>
</dbReference>
<dbReference type="PANTHER" id="PTHR11558:SF11">
    <property type="entry name" value="SPERMIDINE SYNTHASE"/>
    <property type="match status" value="1"/>
</dbReference>
<dbReference type="PANTHER" id="PTHR11558">
    <property type="entry name" value="SPERMIDINE/SPERMINE SYNTHASE"/>
    <property type="match status" value="1"/>
</dbReference>
<dbReference type="Pfam" id="PF17284">
    <property type="entry name" value="Spermine_synt_N"/>
    <property type="match status" value="1"/>
</dbReference>
<dbReference type="Pfam" id="PF01564">
    <property type="entry name" value="Spermine_synth"/>
    <property type="match status" value="1"/>
</dbReference>
<dbReference type="SUPFAM" id="SSF53335">
    <property type="entry name" value="S-adenosyl-L-methionine-dependent methyltransferases"/>
    <property type="match status" value="1"/>
</dbReference>
<dbReference type="PROSITE" id="PS01330">
    <property type="entry name" value="PABS_1"/>
    <property type="match status" value="1"/>
</dbReference>
<dbReference type="PROSITE" id="PS51006">
    <property type="entry name" value="PABS_2"/>
    <property type="match status" value="1"/>
</dbReference>
<evidence type="ECO:0000255" key="1">
    <source>
        <dbReference type="HAMAP-Rule" id="MF_00198"/>
    </source>
</evidence>
<name>SPEE_ERWT9</name>
<gene>
    <name evidence="1" type="primary">speE</name>
    <name type="ordered locus">ETA_08310</name>
</gene>
<sequence>MATNEMWYETLHTGFGQYFSVDKIIYREKTDHQDLVIFENAALGRVMALDGVVQTTERDEFIYHEMMTHVPLLAHGAPKRVLIIGGGDGAMLREVCRHKNIEQITMVEIDAGVVTFCRQYLPNHNAGAYDDARFKLVIDDGVNFVNQTSDKFDVIISDCTDPIGPGESLFTSEFYQGCRRCLNQDGIFVAQNGVCFLQQDEAVNSHRKLSHYFGDVSFYQAAIPTYYGGIMTFAWASDNPALRQLDMATLTARFSEAGLNCRYYNPAIHTGSFALPQYLLNALAD</sequence>
<keyword id="KW-0963">Cytoplasm</keyword>
<keyword id="KW-0620">Polyamine biosynthesis</keyword>
<keyword id="KW-1185">Reference proteome</keyword>
<keyword id="KW-0745">Spermidine biosynthesis</keyword>
<keyword id="KW-0808">Transferase</keyword>
<proteinExistence type="inferred from homology"/>
<reference key="1">
    <citation type="journal article" date="2008" name="Environ. Microbiol.">
        <title>The genome of Erwinia tasmaniensis strain Et1/99, a non-pathogenic bacterium in the genus Erwinia.</title>
        <authorList>
            <person name="Kube M."/>
            <person name="Migdoll A.M."/>
            <person name="Mueller I."/>
            <person name="Kuhl H."/>
            <person name="Beck A."/>
            <person name="Reinhardt R."/>
            <person name="Geider K."/>
        </authorList>
    </citation>
    <scope>NUCLEOTIDE SEQUENCE [LARGE SCALE GENOMIC DNA]</scope>
    <source>
        <strain>DSM 17950 / CFBP 7177 / CIP 109463 / NCPPB 4357 / Et1/99</strain>
    </source>
</reference>
<feature type="chain" id="PRO_1000099283" description="Polyamine aminopropyltransferase">
    <location>
        <begin position="1"/>
        <end position="285"/>
    </location>
</feature>
<feature type="domain" description="PABS" evidence="1">
    <location>
        <begin position="5"/>
        <end position="238"/>
    </location>
</feature>
<feature type="active site" description="Proton acceptor" evidence="1">
    <location>
        <position position="158"/>
    </location>
</feature>
<feature type="binding site" evidence="1">
    <location>
        <position position="33"/>
    </location>
    <ligand>
        <name>S-methyl-5'-thioadenosine</name>
        <dbReference type="ChEBI" id="CHEBI:17509"/>
    </ligand>
</feature>
<feature type="binding site" evidence="1">
    <location>
        <position position="64"/>
    </location>
    <ligand>
        <name>spermidine</name>
        <dbReference type="ChEBI" id="CHEBI:57834"/>
    </ligand>
</feature>
<feature type="binding site" evidence="1">
    <location>
        <position position="88"/>
    </location>
    <ligand>
        <name>spermidine</name>
        <dbReference type="ChEBI" id="CHEBI:57834"/>
    </ligand>
</feature>
<feature type="binding site" evidence="1">
    <location>
        <position position="108"/>
    </location>
    <ligand>
        <name>S-methyl-5'-thioadenosine</name>
        <dbReference type="ChEBI" id="CHEBI:17509"/>
    </ligand>
</feature>
<feature type="binding site" evidence="1">
    <location>
        <begin position="140"/>
        <end position="141"/>
    </location>
    <ligand>
        <name>S-methyl-5'-thioadenosine</name>
        <dbReference type="ChEBI" id="CHEBI:17509"/>
    </ligand>
</feature>
<feature type="binding site" evidence="1">
    <location>
        <begin position="158"/>
        <end position="161"/>
    </location>
    <ligand>
        <name>spermidine</name>
        <dbReference type="ChEBI" id="CHEBI:57834"/>
    </ligand>
</feature>
<feature type="binding site" evidence="1">
    <location>
        <position position="165"/>
    </location>
    <ligand>
        <name>S-methyl-5'-thioadenosine</name>
        <dbReference type="ChEBI" id="CHEBI:17509"/>
    </ligand>
</feature>
<protein>
    <recommendedName>
        <fullName evidence="1">Polyamine aminopropyltransferase</fullName>
    </recommendedName>
    <alternativeName>
        <fullName evidence="1">Putrescine aminopropyltransferase</fullName>
        <shortName evidence="1">PAPT</shortName>
    </alternativeName>
    <alternativeName>
        <fullName evidence="1">Spermidine synthase</fullName>
        <shortName evidence="1">SPDS</shortName>
        <shortName evidence="1">SPDSY</shortName>
        <ecNumber evidence="1">2.5.1.16</ecNumber>
    </alternativeName>
</protein>